<accession>Q8QL16</accession>
<accession>Q5TJ79</accession>
<proteinExistence type="predicted"/>
<keyword id="KW-1185">Reference proteome</keyword>
<name>Y241_SIRV1</name>
<sequence>MEIKERKKLDYLPNVFLLPDGNKISVTDKFINCEKYISRSRLTFQGCFEVSILENKIKVDKAKETNGIYYTPNPPIFNITFKQKIFRKINDIKSMLINLDLSKVSLKSSSIIIKYDNYSIQLFDIYYKGEKLEFSPAFYPDGKQGHLSVYEVPPLKIEKINEELFEKTRIIGIYNHIIEFDINVLKYKQLHIMPGEGALVYLPEPPVVKIISPEHDNVGFTEFGGKWLLFSHPVPKKNPKD</sequence>
<organismHost>
    <name type="scientific">Saccharolobus islandicus</name>
    <name type="common">Sulfolobus islandicus</name>
    <dbReference type="NCBI Taxonomy" id="43080"/>
</organismHost>
<dbReference type="EMBL" id="AJ414696">
    <property type="protein sequence ID" value="CAC93995.1"/>
    <property type="molecule type" value="Genomic_DNA"/>
</dbReference>
<dbReference type="EMBL" id="AJ748296">
    <property type="protein sequence ID" value="CAG38859.1"/>
    <property type="molecule type" value="Genomic_DNA"/>
</dbReference>
<dbReference type="RefSeq" id="NP_666628.1">
    <property type="nucleotide sequence ID" value="NC_004087.1"/>
</dbReference>
<dbReference type="KEGG" id="vg:951377"/>
<dbReference type="OrthoDB" id="17527at10239"/>
<dbReference type="Proteomes" id="UP000002270">
    <property type="component" value="Genome"/>
</dbReference>
<dbReference type="Proteomes" id="UP000223181">
    <property type="component" value="Segment"/>
</dbReference>
<reference key="1">
    <citation type="journal article" date="2001" name="Virology">
        <title>Sequences and replication of genomes of the archaeal rudiviruses SIRV1 and SIRV2: relationships to the archaeal lipothrixvirus SIFV and some eukaryal viruses.</title>
        <authorList>
            <person name="Peng X."/>
            <person name="Blum H."/>
            <person name="She Q."/>
            <person name="Mallok S."/>
            <person name="Bruegger K."/>
            <person name="Garrett R.A."/>
            <person name="Zillig W."/>
            <person name="Prangishvili D."/>
        </authorList>
    </citation>
    <scope>NUCLEOTIDE SEQUENCE [LARGE SCALE GENOMIC DNA]</scope>
    <source>
        <strain>Isolate variant VIII</strain>
    </source>
</reference>
<reference key="2">
    <citation type="journal article" date="2004" name="Mol. Microbiol.">
        <title>Multiple variants of the archaeal DNA rudivirus SIRV1 in a single host and a novel mechanism of genomic variation.</title>
        <authorList>
            <person name="Peng X."/>
            <person name="Kessler A."/>
            <person name="Phan H."/>
            <person name="Garrett R.A."/>
            <person name="Prangishvili D."/>
        </authorList>
    </citation>
    <scope>NUCLEOTIDE SEQUENCE [LARGE SCALE GENOMIC DNA]</scope>
    <source>
        <strain>Isolate variant XX</strain>
    </source>
</reference>
<gene>
    <name type="ORF">241</name>
</gene>
<feature type="chain" id="PRO_0000342296" description="Uncharacterized protein 241">
    <location>
        <begin position="1"/>
        <end position="241"/>
    </location>
</feature>
<protein>
    <recommendedName>
        <fullName>Uncharacterized protein 241</fullName>
    </recommendedName>
</protein>
<organism>
    <name type="scientific">Sulfolobus islandicus rod-shaped virus 1</name>
    <name type="common">SIRV-1</name>
    <name type="synonym">Sulfolobus virus SIRV-1</name>
    <dbReference type="NCBI Taxonomy" id="157898"/>
    <lineage>
        <taxon>Viruses</taxon>
        <taxon>Adnaviria</taxon>
        <taxon>Zilligvirae</taxon>
        <taxon>Taleaviricota</taxon>
        <taxon>Tokiviricetes</taxon>
        <taxon>Ligamenvirales</taxon>
        <taxon>Rudiviridae</taxon>
        <taxon>Icerudivirus</taxon>
        <taxon>Icerudivirus SIRV1</taxon>
    </lineage>
</organism>